<accession>B5Z9W9</accession>
<dbReference type="EC" id="2.7.4.6" evidence="1"/>
<dbReference type="EMBL" id="CP001173">
    <property type="protein sequence ID" value="ACI26949.1"/>
    <property type="molecule type" value="Genomic_DNA"/>
</dbReference>
<dbReference type="RefSeq" id="WP_000813730.1">
    <property type="nucleotide sequence ID" value="NC_011333.1"/>
</dbReference>
<dbReference type="PDB" id="6AY1">
    <property type="method" value="X-ray"/>
    <property type="resolution" value="2.05 A"/>
    <property type="chains" value="A/B/C/D/E/F/G/H=1-137"/>
</dbReference>
<dbReference type="PDBsum" id="6AY1"/>
<dbReference type="SMR" id="B5Z9W9"/>
<dbReference type="GeneID" id="93236564"/>
<dbReference type="KEGG" id="hpg:HPG27_182"/>
<dbReference type="HOGENOM" id="CLU_060216_8_1_7"/>
<dbReference type="BRENDA" id="2.7.4.6">
    <property type="organism ID" value="2604"/>
</dbReference>
<dbReference type="Proteomes" id="UP000001735">
    <property type="component" value="Chromosome"/>
</dbReference>
<dbReference type="GO" id="GO:0005737">
    <property type="term" value="C:cytoplasm"/>
    <property type="evidence" value="ECO:0007669"/>
    <property type="project" value="UniProtKB-SubCell"/>
</dbReference>
<dbReference type="GO" id="GO:0005524">
    <property type="term" value="F:ATP binding"/>
    <property type="evidence" value="ECO:0007669"/>
    <property type="project" value="UniProtKB-UniRule"/>
</dbReference>
<dbReference type="GO" id="GO:0046872">
    <property type="term" value="F:metal ion binding"/>
    <property type="evidence" value="ECO:0007669"/>
    <property type="project" value="UniProtKB-KW"/>
</dbReference>
<dbReference type="GO" id="GO:0004550">
    <property type="term" value="F:nucleoside diphosphate kinase activity"/>
    <property type="evidence" value="ECO:0007669"/>
    <property type="project" value="UniProtKB-UniRule"/>
</dbReference>
<dbReference type="GO" id="GO:0006241">
    <property type="term" value="P:CTP biosynthetic process"/>
    <property type="evidence" value="ECO:0007669"/>
    <property type="project" value="UniProtKB-UniRule"/>
</dbReference>
<dbReference type="GO" id="GO:0006183">
    <property type="term" value="P:GTP biosynthetic process"/>
    <property type="evidence" value="ECO:0007669"/>
    <property type="project" value="UniProtKB-UniRule"/>
</dbReference>
<dbReference type="GO" id="GO:0006228">
    <property type="term" value="P:UTP biosynthetic process"/>
    <property type="evidence" value="ECO:0007669"/>
    <property type="project" value="UniProtKB-UniRule"/>
</dbReference>
<dbReference type="CDD" id="cd04413">
    <property type="entry name" value="NDPk_I"/>
    <property type="match status" value="1"/>
</dbReference>
<dbReference type="FunFam" id="3.30.70.141:FF:000001">
    <property type="entry name" value="Nucleoside diphosphate kinase"/>
    <property type="match status" value="1"/>
</dbReference>
<dbReference type="Gene3D" id="3.30.70.141">
    <property type="entry name" value="Nucleoside diphosphate kinase-like domain"/>
    <property type="match status" value="1"/>
</dbReference>
<dbReference type="HAMAP" id="MF_00451">
    <property type="entry name" value="NDP_kinase"/>
    <property type="match status" value="1"/>
</dbReference>
<dbReference type="InterPro" id="IPR034907">
    <property type="entry name" value="NDK-like_dom"/>
</dbReference>
<dbReference type="InterPro" id="IPR036850">
    <property type="entry name" value="NDK-like_dom_sf"/>
</dbReference>
<dbReference type="InterPro" id="IPR001564">
    <property type="entry name" value="Nucleoside_diP_kinase"/>
</dbReference>
<dbReference type="InterPro" id="IPR023005">
    <property type="entry name" value="Nucleoside_diP_kinase_AS"/>
</dbReference>
<dbReference type="NCBIfam" id="NF001908">
    <property type="entry name" value="PRK00668.1"/>
    <property type="match status" value="1"/>
</dbReference>
<dbReference type="PANTHER" id="PTHR46161">
    <property type="entry name" value="NUCLEOSIDE DIPHOSPHATE KINASE"/>
    <property type="match status" value="1"/>
</dbReference>
<dbReference type="PANTHER" id="PTHR46161:SF3">
    <property type="entry name" value="NUCLEOSIDE DIPHOSPHATE KINASE DDB_G0292928-RELATED"/>
    <property type="match status" value="1"/>
</dbReference>
<dbReference type="Pfam" id="PF00334">
    <property type="entry name" value="NDK"/>
    <property type="match status" value="1"/>
</dbReference>
<dbReference type="PRINTS" id="PR01243">
    <property type="entry name" value="NUCDPKINASE"/>
</dbReference>
<dbReference type="SMART" id="SM00562">
    <property type="entry name" value="NDK"/>
    <property type="match status" value="1"/>
</dbReference>
<dbReference type="SUPFAM" id="SSF54919">
    <property type="entry name" value="Nucleoside diphosphate kinase, NDK"/>
    <property type="match status" value="1"/>
</dbReference>
<dbReference type="PROSITE" id="PS00469">
    <property type="entry name" value="NDPK"/>
    <property type="match status" value="1"/>
</dbReference>
<dbReference type="PROSITE" id="PS51374">
    <property type="entry name" value="NDPK_LIKE"/>
    <property type="match status" value="1"/>
</dbReference>
<sequence length="137" mass="15300">MKQRTLSIIKPDALKKKVVGKIIDRFESNGLEVIAMKRLHLSVKDAENFYAIHRERPFFKDLIEFMVSGPVVVMVLEGKDAVAKNRDLMGATDPKLAQKGTIRADFAESIDANAVHGSDSLENAHNEIAFFFAARDL</sequence>
<reference key="1">
    <citation type="journal article" date="2009" name="J. Bacteriol.">
        <title>The complete genome sequence of Helicobacter pylori strain G27.</title>
        <authorList>
            <person name="Baltrus D.A."/>
            <person name="Amieva M.R."/>
            <person name="Covacci A."/>
            <person name="Lowe T.M."/>
            <person name="Merrell D.S."/>
            <person name="Ottemann K.M."/>
            <person name="Stein M."/>
            <person name="Salama N.R."/>
            <person name="Guillemin K."/>
        </authorList>
    </citation>
    <scope>NUCLEOTIDE SEQUENCE [LARGE SCALE GENOMIC DNA]</scope>
    <source>
        <strain>G27</strain>
    </source>
</reference>
<feature type="chain" id="PRO_1000192260" description="Nucleoside diphosphate kinase">
    <location>
        <begin position="1"/>
        <end position="137"/>
    </location>
</feature>
<feature type="active site" description="Pros-phosphohistidine intermediate" evidence="1">
    <location>
        <position position="116"/>
    </location>
</feature>
<feature type="binding site" evidence="1">
    <location>
        <position position="10"/>
    </location>
    <ligand>
        <name>ATP</name>
        <dbReference type="ChEBI" id="CHEBI:30616"/>
    </ligand>
</feature>
<feature type="binding site" evidence="1">
    <location>
        <position position="58"/>
    </location>
    <ligand>
        <name>ATP</name>
        <dbReference type="ChEBI" id="CHEBI:30616"/>
    </ligand>
</feature>
<feature type="binding site" evidence="1">
    <location>
        <position position="86"/>
    </location>
    <ligand>
        <name>ATP</name>
        <dbReference type="ChEBI" id="CHEBI:30616"/>
    </ligand>
</feature>
<feature type="binding site" evidence="1">
    <location>
        <position position="92"/>
    </location>
    <ligand>
        <name>ATP</name>
        <dbReference type="ChEBI" id="CHEBI:30616"/>
    </ligand>
</feature>
<feature type="binding site" evidence="1">
    <location>
        <position position="103"/>
    </location>
    <ligand>
        <name>ATP</name>
        <dbReference type="ChEBI" id="CHEBI:30616"/>
    </ligand>
</feature>
<feature type="binding site" evidence="1">
    <location>
        <position position="113"/>
    </location>
    <ligand>
        <name>ATP</name>
        <dbReference type="ChEBI" id="CHEBI:30616"/>
    </ligand>
</feature>
<feature type="strand" evidence="2">
    <location>
        <begin position="2"/>
        <end position="9"/>
    </location>
</feature>
<feature type="helix" evidence="2">
    <location>
        <begin position="11"/>
        <end position="15"/>
    </location>
</feature>
<feature type="helix" evidence="2">
    <location>
        <begin position="19"/>
        <end position="27"/>
    </location>
</feature>
<feature type="turn" evidence="2">
    <location>
        <begin position="28"/>
        <end position="30"/>
    </location>
</feature>
<feature type="strand" evidence="2">
    <location>
        <begin position="32"/>
        <end position="39"/>
    </location>
</feature>
<feature type="helix" evidence="2">
    <location>
        <begin position="43"/>
        <end position="49"/>
    </location>
</feature>
<feature type="helix" evidence="2">
    <location>
        <begin position="51"/>
        <end position="53"/>
    </location>
</feature>
<feature type="helix" evidence="2">
    <location>
        <begin position="59"/>
        <end position="67"/>
    </location>
</feature>
<feature type="strand" evidence="2">
    <location>
        <begin position="71"/>
        <end position="79"/>
    </location>
</feature>
<feature type="helix" evidence="2">
    <location>
        <begin position="81"/>
        <end position="89"/>
    </location>
</feature>
<feature type="helix" evidence="2">
    <location>
        <begin position="94"/>
        <end position="96"/>
    </location>
</feature>
<feature type="helix" evidence="2">
    <location>
        <begin position="102"/>
        <end position="106"/>
    </location>
</feature>
<feature type="strand" evidence="2">
    <location>
        <begin position="114"/>
        <end position="117"/>
    </location>
</feature>
<feature type="helix" evidence="2">
    <location>
        <begin position="121"/>
        <end position="131"/>
    </location>
</feature>
<feature type="helix" evidence="2">
    <location>
        <begin position="134"/>
        <end position="136"/>
    </location>
</feature>
<gene>
    <name evidence="1" type="primary">ndk</name>
    <name type="ordered locus">HPG27_182</name>
</gene>
<evidence type="ECO:0000255" key="1">
    <source>
        <dbReference type="HAMAP-Rule" id="MF_00451"/>
    </source>
</evidence>
<evidence type="ECO:0007829" key="2">
    <source>
        <dbReference type="PDB" id="6AY1"/>
    </source>
</evidence>
<proteinExistence type="evidence at protein level"/>
<protein>
    <recommendedName>
        <fullName evidence="1">Nucleoside diphosphate kinase</fullName>
        <shortName evidence="1">NDK</shortName>
        <shortName evidence="1">NDP kinase</shortName>
        <ecNumber evidence="1">2.7.4.6</ecNumber>
    </recommendedName>
    <alternativeName>
        <fullName evidence="1">Nucleoside-2-P kinase</fullName>
    </alternativeName>
</protein>
<keyword id="KW-0002">3D-structure</keyword>
<keyword id="KW-0067">ATP-binding</keyword>
<keyword id="KW-0963">Cytoplasm</keyword>
<keyword id="KW-0418">Kinase</keyword>
<keyword id="KW-0460">Magnesium</keyword>
<keyword id="KW-0479">Metal-binding</keyword>
<keyword id="KW-0546">Nucleotide metabolism</keyword>
<keyword id="KW-0547">Nucleotide-binding</keyword>
<keyword id="KW-0597">Phosphoprotein</keyword>
<keyword id="KW-1185">Reference proteome</keyword>
<keyword id="KW-0808">Transferase</keyword>
<comment type="function">
    <text evidence="1">Major role in the synthesis of nucleoside triphosphates other than ATP. The ATP gamma phosphate is transferred to the NDP beta phosphate via a ping-pong mechanism, using a phosphorylated active-site intermediate.</text>
</comment>
<comment type="catalytic activity">
    <reaction evidence="1">
        <text>a 2'-deoxyribonucleoside 5'-diphosphate + ATP = a 2'-deoxyribonucleoside 5'-triphosphate + ADP</text>
        <dbReference type="Rhea" id="RHEA:44640"/>
        <dbReference type="ChEBI" id="CHEBI:30616"/>
        <dbReference type="ChEBI" id="CHEBI:61560"/>
        <dbReference type="ChEBI" id="CHEBI:73316"/>
        <dbReference type="ChEBI" id="CHEBI:456216"/>
        <dbReference type="EC" id="2.7.4.6"/>
    </reaction>
</comment>
<comment type="catalytic activity">
    <reaction evidence="1">
        <text>a ribonucleoside 5'-diphosphate + ATP = a ribonucleoside 5'-triphosphate + ADP</text>
        <dbReference type="Rhea" id="RHEA:18113"/>
        <dbReference type="ChEBI" id="CHEBI:30616"/>
        <dbReference type="ChEBI" id="CHEBI:57930"/>
        <dbReference type="ChEBI" id="CHEBI:61557"/>
        <dbReference type="ChEBI" id="CHEBI:456216"/>
        <dbReference type="EC" id="2.7.4.6"/>
    </reaction>
</comment>
<comment type="cofactor">
    <cofactor evidence="1">
        <name>Mg(2+)</name>
        <dbReference type="ChEBI" id="CHEBI:18420"/>
    </cofactor>
</comment>
<comment type="subunit">
    <text evidence="1">Homotetramer.</text>
</comment>
<comment type="subcellular location">
    <subcellularLocation>
        <location evidence="1">Cytoplasm</location>
    </subcellularLocation>
</comment>
<comment type="similarity">
    <text evidence="1">Belongs to the NDK family.</text>
</comment>
<organism>
    <name type="scientific">Helicobacter pylori (strain G27)</name>
    <dbReference type="NCBI Taxonomy" id="563041"/>
    <lineage>
        <taxon>Bacteria</taxon>
        <taxon>Pseudomonadati</taxon>
        <taxon>Campylobacterota</taxon>
        <taxon>Epsilonproteobacteria</taxon>
        <taxon>Campylobacterales</taxon>
        <taxon>Helicobacteraceae</taxon>
        <taxon>Helicobacter</taxon>
    </lineage>
</organism>
<name>NDK_HELPG</name>